<accession>Q045Q5</accession>
<protein>
    <recommendedName>
        <fullName evidence="1">DNA mismatch repair protein MutS</fullName>
    </recommendedName>
</protein>
<sequence>MAKKDTTPMMKQYYEIKEQYPDAFLFYRVGDFYELFEDDAVKGAQILELTLTHRSNKTKNPIPMAGVPHLAVDTYVNTLVEKGYKVALCEQLEDPKKAKGMVKRGIIQLITPGTMMHERPDQAKDSNYLTSVISTNSGFGLAYSDLSTGETFSTHLTDFEGVANELLSLQTREVVYNGHLTEANKDFLKKANITVSEPVKVEGEHAEISYVTQNLTDDAEIKATKQLVAYLLSTQKRSLAHLQVAQSYEPTQYLQMSHTVQTNLELIKSAKTSKKMGSLFWLLDKTSTAMGGRLLKSWIERPLLSVTEITRRQEMVQALLDDYFTREKVIDSLKGVYDLERLTGRIAFGSVNAREMLQLAHSLGAIPDILNSLLETNNPHLQNFAKQIDPLKGIHDLIVNTIVDNPPLLTTEGGLIREGVSDQLDRYRDAMNNGKKWLSEMESHEREVTGINNLKVGYNKVFGYYIEVTNSNKDKVPTDRYTRKQTLTNAERYITPDLKEHESLILEAEAKSTGLEYDLFVKLRENVKKYIPALQKLAKQVASLDVLTNFATVSEQNNYVRPDFTVDKQEINVVNGRHPVVEQVMTAGSYIPNDVKMDQDTDIFLITGPNMSGKSTYMRQMALIAIMAQIGCFVPADSATLPIFDQIFTRIGAADDLISGQSTFMVEMSEANDALQHATKRSLVLFDEIGRGTATYDGMALAGAIVKYLHDKVGAKTLFATHYHELTDLDQTLKHLKNIHVGATEENGKLIFLHKILPGPADQSYGIHVAQLAGLPHKVLREATTMLKRLEKQGAGELQPASEQLDLFTAEEASVPAISDDEKDVLDDIQNVYLADKTPLQVMELVAQWQQELKDKD</sequence>
<keyword id="KW-0067">ATP-binding</keyword>
<keyword id="KW-0227">DNA damage</keyword>
<keyword id="KW-0234">DNA repair</keyword>
<keyword id="KW-0238">DNA-binding</keyword>
<keyword id="KW-0547">Nucleotide-binding</keyword>
<gene>
    <name evidence="1" type="primary">mutS</name>
    <name type="ordered locus">LGAS_0412</name>
</gene>
<feature type="chain" id="PRO_1000008068" description="DNA mismatch repair protein MutS">
    <location>
        <begin position="1"/>
        <end position="857"/>
    </location>
</feature>
<feature type="binding site" evidence="1">
    <location>
        <begin position="608"/>
        <end position="615"/>
    </location>
    <ligand>
        <name>ATP</name>
        <dbReference type="ChEBI" id="CHEBI:30616"/>
    </ligand>
</feature>
<dbReference type="EMBL" id="CP000413">
    <property type="protein sequence ID" value="ABJ59817.1"/>
    <property type="molecule type" value="Genomic_DNA"/>
</dbReference>
<dbReference type="RefSeq" id="WP_003652283.1">
    <property type="nucleotide sequence ID" value="NZ_WBMG01000012.1"/>
</dbReference>
<dbReference type="SMR" id="Q045Q5"/>
<dbReference type="GeneID" id="29639283"/>
<dbReference type="KEGG" id="lga:LGAS_0412"/>
<dbReference type="HOGENOM" id="CLU_002472_4_0_9"/>
<dbReference type="BioCyc" id="LGAS324831:G1G6Y-412-MONOMER"/>
<dbReference type="Proteomes" id="UP000000664">
    <property type="component" value="Chromosome"/>
</dbReference>
<dbReference type="GO" id="GO:0005829">
    <property type="term" value="C:cytosol"/>
    <property type="evidence" value="ECO:0007669"/>
    <property type="project" value="TreeGrafter"/>
</dbReference>
<dbReference type="GO" id="GO:0005524">
    <property type="term" value="F:ATP binding"/>
    <property type="evidence" value="ECO:0007669"/>
    <property type="project" value="UniProtKB-UniRule"/>
</dbReference>
<dbReference type="GO" id="GO:0140664">
    <property type="term" value="F:ATP-dependent DNA damage sensor activity"/>
    <property type="evidence" value="ECO:0007669"/>
    <property type="project" value="InterPro"/>
</dbReference>
<dbReference type="GO" id="GO:0003684">
    <property type="term" value="F:damaged DNA binding"/>
    <property type="evidence" value="ECO:0007669"/>
    <property type="project" value="UniProtKB-UniRule"/>
</dbReference>
<dbReference type="GO" id="GO:0030983">
    <property type="term" value="F:mismatched DNA binding"/>
    <property type="evidence" value="ECO:0007669"/>
    <property type="project" value="InterPro"/>
</dbReference>
<dbReference type="GO" id="GO:0006298">
    <property type="term" value="P:mismatch repair"/>
    <property type="evidence" value="ECO:0007669"/>
    <property type="project" value="UniProtKB-UniRule"/>
</dbReference>
<dbReference type="CDD" id="cd03284">
    <property type="entry name" value="ABC_MutS1"/>
    <property type="match status" value="1"/>
</dbReference>
<dbReference type="FunFam" id="1.10.1420.10:FF:000001">
    <property type="entry name" value="DNA mismatch repair protein MutS"/>
    <property type="match status" value="1"/>
</dbReference>
<dbReference type="FunFam" id="3.40.1170.10:FF:000001">
    <property type="entry name" value="DNA mismatch repair protein MutS"/>
    <property type="match status" value="1"/>
</dbReference>
<dbReference type="FunFam" id="3.40.50.300:FF:000896">
    <property type="entry name" value="DNA mismatch repair protein MutS"/>
    <property type="match status" value="1"/>
</dbReference>
<dbReference type="Gene3D" id="1.10.1420.10">
    <property type="match status" value="2"/>
</dbReference>
<dbReference type="Gene3D" id="3.40.1170.10">
    <property type="entry name" value="DNA repair protein MutS, domain I"/>
    <property type="match status" value="1"/>
</dbReference>
<dbReference type="Gene3D" id="3.30.420.110">
    <property type="entry name" value="MutS, connector domain"/>
    <property type="match status" value="1"/>
</dbReference>
<dbReference type="Gene3D" id="3.40.50.300">
    <property type="entry name" value="P-loop containing nucleotide triphosphate hydrolases"/>
    <property type="match status" value="1"/>
</dbReference>
<dbReference type="HAMAP" id="MF_00096">
    <property type="entry name" value="MutS"/>
    <property type="match status" value="1"/>
</dbReference>
<dbReference type="InterPro" id="IPR005748">
    <property type="entry name" value="DNA_mismatch_repair_MutS"/>
</dbReference>
<dbReference type="InterPro" id="IPR007695">
    <property type="entry name" value="DNA_mismatch_repair_MutS-lik_N"/>
</dbReference>
<dbReference type="InterPro" id="IPR017261">
    <property type="entry name" value="DNA_mismatch_repair_MutS/MSH"/>
</dbReference>
<dbReference type="InterPro" id="IPR000432">
    <property type="entry name" value="DNA_mismatch_repair_MutS_C"/>
</dbReference>
<dbReference type="InterPro" id="IPR007861">
    <property type="entry name" value="DNA_mismatch_repair_MutS_clamp"/>
</dbReference>
<dbReference type="InterPro" id="IPR007696">
    <property type="entry name" value="DNA_mismatch_repair_MutS_core"/>
</dbReference>
<dbReference type="InterPro" id="IPR016151">
    <property type="entry name" value="DNA_mismatch_repair_MutS_N"/>
</dbReference>
<dbReference type="InterPro" id="IPR036187">
    <property type="entry name" value="DNA_mismatch_repair_MutS_sf"/>
</dbReference>
<dbReference type="InterPro" id="IPR007860">
    <property type="entry name" value="DNA_mmatch_repair_MutS_con_dom"/>
</dbReference>
<dbReference type="InterPro" id="IPR045076">
    <property type="entry name" value="MutS"/>
</dbReference>
<dbReference type="InterPro" id="IPR036678">
    <property type="entry name" value="MutS_con_dom_sf"/>
</dbReference>
<dbReference type="InterPro" id="IPR027417">
    <property type="entry name" value="P-loop_NTPase"/>
</dbReference>
<dbReference type="NCBIfam" id="TIGR01070">
    <property type="entry name" value="mutS1"/>
    <property type="match status" value="1"/>
</dbReference>
<dbReference type="NCBIfam" id="NF003810">
    <property type="entry name" value="PRK05399.1"/>
    <property type="match status" value="1"/>
</dbReference>
<dbReference type="PANTHER" id="PTHR11361:SF34">
    <property type="entry name" value="DNA MISMATCH REPAIR PROTEIN MSH1, MITOCHONDRIAL"/>
    <property type="match status" value="1"/>
</dbReference>
<dbReference type="PANTHER" id="PTHR11361">
    <property type="entry name" value="DNA MISMATCH REPAIR PROTEIN MUTS FAMILY MEMBER"/>
    <property type="match status" value="1"/>
</dbReference>
<dbReference type="Pfam" id="PF01624">
    <property type="entry name" value="MutS_I"/>
    <property type="match status" value="1"/>
</dbReference>
<dbReference type="Pfam" id="PF05188">
    <property type="entry name" value="MutS_II"/>
    <property type="match status" value="1"/>
</dbReference>
<dbReference type="Pfam" id="PF05192">
    <property type="entry name" value="MutS_III"/>
    <property type="match status" value="1"/>
</dbReference>
<dbReference type="Pfam" id="PF05190">
    <property type="entry name" value="MutS_IV"/>
    <property type="match status" value="1"/>
</dbReference>
<dbReference type="Pfam" id="PF00488">
    <property type="entry name" value="MutS_V"/>
    <property type="match status" value="1"/>
</dbReference>
<dbReference type="PIRSF" id="PIRSF037677">
    <property type="entry name" value="DNA_mis_repair_Msh6"/>
    <property type="match status" value="1"/>
</dbReference>
<dbReference type="SMART" id="SM00534">
    <property type="entry name" value="MUTSac"/>
    <property type="match status" value="1"/>
</dbReference>
<dbReference type="SMART" id="SM00533">
    <property type="entry name" value="MUTSd"/>
    <property type="match status" value="1"/>
</dbReference>
<dbReference type="SUPFAM" id="SSF55271">
    <property type="entry name" value="DNA repair protein MutS, domain I"/>
    <property type="match status" value="1"/>
</dbReference>
<dbReference type="SUPFAM" id="SSF53150">
    <property type="entry name" value="DNA repair protein MutS, domain II"/>
    <property type="match status" value="1"/>
</dbReference>
<dbReference type="SUPFAM" id="SSF48334">
    <property type="entry name" value="DNA repair protein MutS, domain III"/>
    <property type="match status" value="1"/>
</dbReference>
<dbReference type="SUPFAM" id="SSF52540">
    <property type="entry name" value="P-loop containing nucleoside triphosphate hydrolases"/>
    <property type="match status" value="1"/>
</dbReference>
<dbReference type="PROSITE" id="PS00486">
    <property type="entry name" value="DNA_MISMATCH_REPAIR_2"/>
    <property type="match status" value="1"/>
</dbReference>
<proteinExistence type="inferred from homology"/>
<reference key="1">
    <citation type="journal article" date="2006" name="Proc. Natl. Acad. Sci. U.S.A.">
        <title>Comparative genomics of the lactic acid bacteria.</title>
        <authorList>
            <person name="Makarova K.S."/>
            <person name="Slesarev A."/>
            <person name="Wolf Y.I."/>
            <person name="Sorokin A."/>
            <person name="Mirkin B."/>
            <person name="Koonin E.V."/>
            <person name="Pavlov A."/>
            <person name="Pavlova N."/>
            <person name="Karamychev V."/>
            <person name="Polouchine N."/>
            <person name="Shakhova V."/>
            <person name="Grigoriev I."/>
            <person name="Lou Y."/>
            <person name="Rohksar D."/>
            <person name="Lucas S."/>
            <person name="Huang K."/>
            <person name="Goodstein D.M."/>
            <person name="Hawkins T."/>
            <person name="Plengvidhya V."/>
            <person name="Welker D."/>
            <person name="Hughes J."/>
            <person name="Goh Y."/>
            <person name="Benson A."/>
            <person name="Baldwin K."/>
            <person name="Lee J.-H."/>
            <person name="Diaz-Muniz I."/>
            <person name="Dosti B."/>
            <person name="Smeianov V."/>
            <person name="Wechter W."/>
            <person name="Barabote R."/>
            <person name="Lorca G."/>
            <person name="Altermann E."/>
            <person name="Barrangou R."/>
            <person name="Ganesan B."/>
            <person name="Xie Y."/>
            <person name="Rawsthorne H."/>
            <person name="Tamir D."/>
            <person name="Parker C."/>
            <person name="Breidt F."/>
            <person name="Broadbent J.R."/>
            <person name="Hutkins R."/>
            <person name="O'Sullivan D."/>
            <person name="Steele J."/>
            <person name="Unlu G."/>
            <person name="Saier M.H. Jr."/>
            <person name="Klaenhammer T."/>
            <person name="Richardson P."/>
            <person name="Kozyavkin S."/>
            <person name="Weimer B.C."/>
            <person name="Mills D.A."/>
        </authorList>
    </citation>
    <scope>NUCLEOTIDE SEQUENCE [LARGE SCALE GENOMIC DNA]</scope>
    <source>
        <strain>ATCC 33323 / DSM 20243 / BCRC 14619 / CIP 102991 / JCM 1131 / KCTC 3163 / NCIMB 11718 / NCTC 13722 / AM63</strain>
    </source>
</reference>
<name>MUTS_LACGA</name>
<organism>
    <name type="scientific">Lactobacillus gasseri (strain ATCC 33323 / DSM 20243 / BCRC 14619 / CIP 102991 / JCM 1131 / KCTC 3163 / NCIMB 11718 / NCTC 13722 / AM63)</name>
    <dbReference type="NCBI Taxonomy" id="324831"/>
    <lineage>
        <taxon>Bacteria</taxon>
        <taxon>Bacillati</taxon>
        <taxon>Bacillota</taxon>
        <taxon>Bacilli</taxon>
        <taxon>Lactobacillales</taxon>
        <taxon>Lactobacillaceae</taxon>
        <taxon>Lactobacillus</taxon>
    </lineage>
</organism>
<evidence type="ECO:0000255" key="1">
    <source>
        <dbReference type="HAMAP-Rule" id="MF_00096"/>
    </source>
</evidence>
<comment type="function">
    <text evidence="1">This protein is involved in the repair of mismatches in DNA. It is possible that it carries out the mismatch recognition step. This protein has a weak ATPase activity.</text>
</comment>
<comment type="similarity">
    <text evidence="1">Belongs to the DNA mismatch repair MutS family.</text>
</comment>